<gene>
    <name evidence="1" type="primary">gltX</name>
    <name type="ordered locus">PXO_04820</name>
</gene>
<name>SYE_XANOP</name>
<organism>
    <name type="scientific">Xanthomonas oryzae pv. oryzae (strain PXO99A)</name>
    <dbReference type="NCBI Taxonomy" id="360094"/>
    <lineage>
        <taxon>Bacteria</taxon>
        <taxon>Pseudomonadati</taxon>
        <taxon>Pseudomonadota</taxon>
        <taxon>Gammaproteobacteria</taxon>
        <taxon>Lysobacterales</taxon>
        <taxon>Lysobacteraceae</taxon>
        <taxon>Xanthomonas</taxon>
    </lineage>
</organism>
<dbReference type="EC" id="6.1.1.17" evidence="1"/>
<dbReference type="EMBL" id="CP000967">
    <property type="protein sequence ID" value="ACD58032.1"/>
    <property type="molecule type" value="Genomic_DNA"/>
</dbReference>
<dbReference type="RefSeq" id="WP_011258289.1">
    <property type="nucleotide sequence ID" value="NC_010717.2"/>
</dbReference>
<dbReference type="SMR" id="B2SSC6"/>
<dbReference type="KEGG" id="xop:PXO_04820"/>
<dbReference type="eggNOG" id="COG0008">
    <property type="taxonomic scope" value="Bacteria"/>
</dbReference>
<dbReference type="HOGENOM" id="CLU_015768_6_3_6"/>
<dbReference type="Proteomes" id="UP000001740">
    <property type="component" value="Chromosome"/>
</dbReference>
<dbReference type="GO" id="GO:0005829">
    <property type="term" value="C:cytosol"/>
    <property type="evidence" value="ECO:0007669"/>
    <property type="project" value="TreeGrafter"/>
</dbReference>
<dbReference type="GO" id="GO:0005524">
    <property type="term" value="F:ATP binding"/>
    <property type="evidence" value="ECO:0007669"/>
    <property type="project" value="UniProtKB-UniRule"/>
</dbReference>
<dbReference type="GO" id="GO:0004818">
    <property type="term" value="F:glutamate-tRNA ligase activity"/>
    <property type="evidence" value="ECO:0007669"/>
    <property type="project" value="UniProtKB-UniRule"/>
</dbReference>
<dbReference type="GO" id="GO:0000049">
    <property type="term" value="F:tRNA binding"/>
    <property type="evidence" value="ECO:0007669"/>
    <property type="project" value="InterPro"/>
</dbReference>
<dbReference type="GO" id="GO:0008270">
    <property type="term" value="F:zinc ion binding"/>
    <property type="evidence" value="ECO:0007669"/>
    <property type="project" value="InterPro"/>
</dbReference>
<dbReference type="GO" id="GO:0006424">
    <property type="term" value="P:glutamyl-tRNA aminoacylation"/>
    <property type="evidence" value="ECO:0007669"/>
    <property type="project" value="UniProtKB-UniRule"/>
</dbReference>
<dbReference type="CDD" id="cd00808">
    <property type="entry name" value="GluRS_core"/>
    <property type="match status" value="1"/>
</dbReference>
<dbReference type="FunFam" id="3.40.50.620:FF:000007">
    <property type="entry name" value="Glutamate--tRNA ligase"/>
    <property type="match status" value="1"/>
</dbReference>
<dbReference type="Gene3D" id="1.10.10.350">
    <property type="match status" value="1"/>
</dbReference>
<dbReference type="Gene3D" id="3.40.50.620">
    <property type="entry name" value="HUPs"/>
    <property type="match status" value="1"/>
</dbReference>
<dbReference type="HAMAP" id="MF_00022">
    <property type="entry name" value="Glu_tRNA_synth_type1"/>
    <property type="match status" value="1"/>
</dbReference>
<dbReference type="InterPro" id="IPR045462">
    <property type="entry name" value="aa-tRNA-synth_I_cd-bd"/>
</dbReference>
<dbReference type="InterPro" id="IPR020751">
    <property type="entry name" value="aa-tRNA-synth_I_codon-bd_sub2"/>
</dbReference>
<dbReference type="InterPro" id="IPR001412">
    <property type="entry name" value="aa-tRNA-synth_I_CS"/>
</dbReference>
<dbReference type="InterPro" id="IPR008925">
    <property type="entry name" value="aa_tRNA-synth_I_cd-bd_sf"/>
</dbReference>
<dbReference type="InterPro" id="IPR004527">
    <property type="entry name" value="Glu-tRNA-ligase_bac/mito"/>
</dbReference>
<dbReference type="InterPro" id="IPR000924">
    <property type="entry name" value="Glu/Gln-tRNA-synth"/>
</dbReference>
<dbReference type="InterPro" id="IPR020058">
    <property type="entry name" value="Glu/Gln-tRNA-synth_Ib_cat-dom"/>
</dbReference>
<dbReference type="InterPro" id="IPR049940">
    <property type="entry name" value="GluQ/Sye"/>
</dbReference>
<dbReference type="InterPro" id="IPR033910">
    <property type="entry name" value="GluRS_core"/>
</dbReference>
<dbReference type="InterPro" id="IPR014729">
    <property type="entry name" value="Rossmann-like_a/b/a_fold"/>
</dbReference>
<dbReference type="NCBIfam" id="TIGR00464">
    <property type="entry name" value="gltX_bact"/>
    <property type="match status" value="1"/>
</dbReference>
<dbReference type="PANTHER" id="PTHR43311">
    <property type="entry name" value="GLUTAMATE--TRNA LIGASE"/>
    <property type="match status" value="1"/>
</dbReference>
<dbReference type="PANTHER" id="PTHR43311:SF2">
    <property type="entry name" value="GLUTAMATE--TRNA LIGASE, MITOCHONDRIAL-RELATED"/>
    <property type="match status" value="1"/>
</dbReference>
<dbReference type="Pfam" id="PF19269">
    <property type="entry name" value="Anticodon_2"/>
    <property type="match status" value="1"/>
</dbReference>
<dbReference type="Pfam" id="PF00749">
    <property type="entry name" value="tRNA-synt_1c"/>
    <property type="match status" value="1"/>
</dbReference>
<dbReference type="PRINTS" id="PR00987">
    <property type="entry name" value="TRNASYNTHGLU"/>
</dbReference>
<dbReference type="SUPFAM" id="SSF48163">
    <property type="entry name" value="An anticodon-binding domain of class I aminoacyl-tRNA synthetases"/>
    <property type="match status" value="1"/>
</dbReference>
<dbReference type="SUPFAM" id="SSF52374">
    <property type="entry name" value="Nucleotidylyl transferase"/>
    <property type="match status" value="1"/>
</dbReference>
<dbReference type="PROSITE" id="PS00178">
    <property type="entry name" value="AA_TRNA_LIGASE_I"/>
    <property type="match status" value="1"/>
</dbReference>
<sequence>MACRTRFAPSPTGYLHIGGARTALYCWLEARRRGGQFVLRIEDTDRQRSTQAAIDAILEAMQWLGLGYDEGPIYQTQRVARYQEVAEQLLAQGKAYYAYETREELDAMREAAMAKQEKPRYDGAAREQNLPYRDDPNRVIRFKNPIGGTVVFDDLIKGRIEIANSELDDMVIFRPDGLPTYNFAVVVDDWDMGITEVIRGDDHINNTPRQINIYAALGAPVPKFAHMPMILDEQGTKLSKRTGAADVMQYKDAGYLPHALINYLARLGWSHGDQELFTPQELLDLFDVKDVNSKAARLDMAKLGWVNQHYLKTDDPASIAPQLEYQLAKLGVDLAAGPAAADVVVALRERVHTLKEMAEKAVVWYQPLETYDAAAVMKHLKLGAEVPLGKARELLAAVDQWSVDSVSAALHDAAAALELGMGKVAQPLRVAITGTQVSPDISQTVYLAGREGALKRIDAALTKIGAA</sequence>
<feature type="chain" id="PRO_1000090122" description="Glutamate--tRNA ligase">
    <location>
        <begin position="1"/>
        <end position="467"/>
    </location>
</feature>
<feature type="short sequence motif" description="'HIGH' region" evidence="1">
    <location>
        <begin position="9"/>
        <end position="19"/>
    </location>
</feature>
<feature type="short sequence motif" description="'KMSKS' region" evidence="1">
    <location>
        <begin position="237"/>
        <end position="241"/>
    </location>
</feature>
<feature type="binding site" evidence="1">
    <location>
        <position position="240"/>
    </location>
    <ligand>
        <name>ATP</name>
        <dbReference type="ChEBI" id="CHEBI:30616"/>
    </ligand>
</feature>
<reference key="1">
    <citation type="journal article" date="2008" name="BMC Genomics">
        <title>Genome sequence and rapid evolution of the rice pathogen Xanthomonas oryzae pv. oryzae PXO99A.</title>
        <authorList>
            <person name="Salzberg S.L."/>
            <person name="Sommer D.D."/>
            <person name="Schatz M.C."/>
            <person name="Phillippy A.M."/>
            <person name="Rabinowicz P.D."/>
            <person name="Tsuge S."/>
            <person name="Furutani A."/>
            <person name="Ochiai H."/>
            <person name="Delcher A.L."/>
            <person name="Kelley D."/>
            <person name="Madupu R."/>
            <person name="Puiu D."/>
            <person name="Radune D."/>
            <person name="Shumway M."/>
            <person name="Trapnell C."/>
            <person name="Aparna G."/>
            <person name="Jha G."/>
            <person name="Pandey A."/>
            <person name="Patil P.B."/>
            <person name="Ishihara H."/>
            <person name="Meyer D.F."/>
            <person name="Szurek B."/>
            <person name="Verdier V."/>
            <person name="Koebnik R."/>
            <person name="Dow J.M."/>
            <person name="Ryan R.P."/>
            <person name="Hirata H."/>
            <person name="Tsuyumu S."/>
            <person name="Won Lee S."/>
            <person name="Seo Y.-S."/>
            <person name="Sriariyanum M."/>
            <person name="Ronald P.C."/>
            <person name="Sonti R.V."/>
            <person name="Van Sluys M.-A."/>
            <person name="Leach J.E."/>
            <person name="White F.F."/>
            <person name="Bogdanove A.J."/>
        </authorList>
    </citation>
    <scope>NUCLEOTIDE SEQUENCE [LARGE SCALE GENOMIC DNA]</scope>
    <source>
        <strain>PXO99A</strain>
    </source>
</reference>
<comment type="function">
    <text evidence="1">Catalyzes the attachment of glutamate to tRNA(Glu) in a two-step reaction: glutamate is first activated by ATP to form Glu-AMP and then transferred to the acceptor end of tRNA(Glu).</text>
</comment>
<comment type="catalytic activity">
    <reaction evidence="1">
        <text>tRNA(Glu) + L-glutamate + ATP = L-glutamyl-tRNA(Glu) + AMP + diphosphate</text>
        <dbReference type="Rhea" id="RHEA:23540"/>
        <dbReference type="Rhea" id="RHEA-COMP:9663"/>
        <dbReference type="Rhea" id="RHEA-COMP:9680"/>
        <dbReference type="ChEBI" id="CHEBI:29985"/>
        <dbReference type="ChEBI" id="CHEBI:30616"/>
        <dbReference type="ChEBI" id="CHEBI:33019"/>
        <dbReference type="ChEBI" id="CHEBI:78442"/>
        <dbReference type="ChEBI" id="CHEBI:78520"/>
        <dbReference type="ChEBI" id="CHEBI:456215"/>
        <dbReference type="EC" id="6.1.1.17"/>
    </reaction>
</comment>
<comment type="subunit">
    <text evidence="1">Monomer.</text>
</comment>
<comment type="subcellular location">
    <subcellularLocation>
        <location evidence="1">Cytoplasm</location>
    </subcellularLocation>
</comment>
<comment type="similarity">
    <text evidence="1">Belongs to the class-I aminoacyl-tRNA synthetase family. Glutamate--tRNA ligase type 1 subfamily.</text>
</comment>
<keyword id="KW-0030">Aminoacyl-tRNA synthetase</keyword>
<keyword id="KW-0067">ATP-binding</keyword>
<keyword id="KW-0963">Cytoplasm</keyword>
<keyword id="KW-0436">Ligase</keyword>
<keyword id="KW-0547">Nucleotide-binding</keyword>
<keyword id="KW-0648">Protein biosynthesis</keyword>
<evidence type="ECO:0000255" key="1">
    <source>
        <dbReference type="HAMAP-Rule" id="MF_00022"/>
    </source>
</evidence>
<accession>B2SSC6</accession>
<protein>
    <recommendedName>
        <fullName evidence="1">Glutamate--tRNA ligase</fullName>
        <ecNumber evidence="1">6.1.1.17</ecNumber>
    </recommendedName>
    <alternativeName>
        <fullName evidence="1">Glutamyl-tRNA synthetase</fullName>
        <shortName evidence="1">GluRS</shortName>
    </alternativeName>
</protein>
<proteinExistence type="inferred from homology"/>